<comment type="function">
    <text evidence="1">One of the primary rRNA binding proteins, it binds directly to 16S rRNA central domain where it helps coordinate assembly of the platform of the 30S subunit.</text>
</comment>
<comment type="subunit">
    <text evidence="1">Part of the 30S ribosomal subunit. Contacts proteins S5 and S12.</text>
</comment>
<comment type="similarity">
    <text evidence="1">Belongs to the universal ribosomal protein uS8 family.</text>
</comment>
<name>RS8_BRUMB</name>
<organism>
    <name type="scientific">Brucella melitensis biotype 2 (strain ATCC 23457)</name>
    <dbReference type="NCBI Taxonomy" id="546272"/>
    <lineage>
        <taxon>Bacteria</taxon>
        <taxon>Pseudomonadati</taxon>
        <taxon>Pseudomonadota</taxon>
        <taxon>Alphaproteobacteria</taxon>
        <taxon>Hyphomicrobiales</taxon>
        <taxon>Brucellaceae</taxon>
        <taxon>Brucella/Ochrobactrum group</taxon>
        <taxon>Brucella</taxon>
    </lineage>
</organism>
<feature type="chain" id="PRO_1000165312" description="Small ribosomal subunit protein uS8">
    <location>
        <begin position="1"/>
        <end position="132"/>
    </location>
</feature>
<proteinExistence type="inferred from homology"/>
<evidence type="ECO:0000255" key="1">
    <source>
        <dbReference type="HAMAP-Rule" id="MF_01302"/>
    </source>
</evidence>
<evidence type="ECO:0000305" key="2"/>
<keyword id="KW-0687">Ribonucleoprotein</keyword>
<keyword id="KW-0689">Ribosomal protein</keyword>
<keyword id="KW-0694">RNA-binding</keyword>
<keyword id="KW-0699">rRNA-binding</keyword>
<gene>
    <name evidence="1" type="primary">rpsH</name>
    <name type="ordered locus">BMEA_A1264</name>
</gene>
<reference key="1">
    <citation type="submission" date="2009-03" db="EMBL/GenBank/DDBJ databases">
        <title>Brucella melitensis ATCC 23457 whole genome shotgun sequencing project.</title>
        <authorList>
            <person name="Setubal J.C."/>
            <person name="Boyle S."/>
            <person name="Crasta O.R."/>
            <person name="Gillespie J.J."/>
            <person name="Kenyon R.W."/>
            <person name="Lu J."/>
            <person name="Mane S."/>
            <person name="Nagrani S."/>
            <person name="Shallom J.M."/>
            <person name="Shallom S."/>
            <person name="Shukla M."/>
            <person name="Snyder E.E."/>
            <person name="Sobral B.W."/>
            <person name="Wattam A.R."/>
            <person name="Will R."/>
            <person name="Williams K."/>
            <person name="Yoo H."/>
            <person name="Munk C."/>
            <person name="Tapia R."/>
            <person name="Han C."/>
            <person name="Detter J.C."/>
            <person name="Bruce D."/>
            <person name="Brettin T.S."/>
        </authorList>
    </citation>
    <scope>NUCLEOTIDE SEQUENCE [LARGE SCALE GENOMIC DNA]</scope>
    <source>
        <strain>ATCC 23457</strain>
    </source>
</reference>
<dbReference type="EMBL" id="CP001488">
    <property type="protein sequence ID" value="ACO00995.1"/>
    <property type="molecule type" value="Genomic_DNA"/>
</dbReference>
<dbReference type="RefSeq" id="WP_004683921.1">
    <property type="nucleotide sequence ID" value="NC_012441.1"/>
</dbReference>
<dbReference type="SMR" id="C0RJI7"/>
<dbReference type="GeneID" id="97533538"/>
<dbReference type="KEGG" id="bmi:BMEA_A1264"/>
<dbReference type="HOGENOM" id="CLU_098428_0_0_5"/>
<dbReference type="Proteomes" id="UP000001748">
    <property type="component" value="Chromosome I"/>
</dbReference>
<dbReference type="GO" id="GO:1990904">
    <property type="term" value="C:ribonucleoprotein complex"/>
    <property type="evidence" value="ECO:0007669"/>
    <property type="project" value="UniProtKB-KW"/>
</dbReference>
<dbReference type="GO" id="GO:0005840">
    <property type="term" value="C:ribosome"/>
    <property type="evidence" value="ECO:0007669"/>
    <property type="project" value="UniProtKB-KW"/>
</dbReference>
<dbReference type="GO" id="GO:0019843">
    <property type="term" value="F:rRNA binding"/>
    <property type="evidence" value="ECO:0007669"/>
    <property type="project" value="UniProtKB-UniRule"/>
</dbReference>
<dbReference type="GO" id="GO:0003735">
    <property type="term" value="F:structural constituent of ribosome"/>
    <property type="evidence" value="ECO:0007669"/>
    <property type="project" value="InterPro"/>
</dbReference>
<dbReference type="GO" id="GO:0006412">
    <property type="term" value="P:translation"/>
    <property type="evidence" value="ECO:0007669"/>
    <property type="project" value="UniProtKB-UniRule"/>
</dbReference>
<dbReference type="FunFam" id="3.30.1370.30:FF:000002">
    <property type="entry name" value="30S ribosomal protein S8"/>
    <property type="match status" value="1"/>
</dbReference>
<dbReference type="FunFam" id="3.30.1490.10:FF:000001">
    <property type="entry name" value="30S ribosomal protein S8"/>
    <property type="match status" value="1"/>
</dbReference>
<dbReference type="Gene3D" id="3.30.1370.30">
    <property type="match status" value="1"/>
</dbReference>
<dbReference type="Gene3D" id="3.30.1490.10">
    <property type="match status" value="1"/>
</dbReference>
<dbReference type="HAMAP" id="MF_01302_B">
    <property type="entry name" value="Ribosomal_uS8_B"/>
    <property type="match status" value="1"/>
</dbReference>
<dbReference type="InterPro" id="IPR000630">
    <property type="entry name" value="Ribosomal_uS8"/>
</dbReference>
<dbReference type="InterPro" id="IPR047863">
    <property type="entry name" value="Ribosomal_uS8_CS"/>
</dbReference>
<dbReference type="InterPro" id="IPR035987">
    <property type="entry name" value="Ribosomal_uS8_sf"/>
</dbReference>
<dbReference type="NCBIfam" id="NF001109">
    <property type="entry name" value="PRK00136.1"/>
    <property type="match status" value="1"/>
</dbReference>
<dbReference type="PANTHER" id="PTHR11758">
    <property type="entry name" value="40S RIBOSOMAL PROTEIN S15A"/>
    <property type="match status" value="1"/>
</dbReference>
<dbReference type="Pfam" id="PF00410">
    <property type="entry name" value="Ribosomal_S8"/>
    <property type="match status" value="1"/>
</dbReference>
<dbReference type="SUPFAM" id="SSF56047">
    <property type="entry name" value="Ribosomal protein S8"/>
    <property type="match status" value="1"/>
</dbReference>
<dbReference type="PROSITE" id="PS00053">
    <property type="entry name" value="RIBOSOMAL_S8"/>
    <property type="match status" value="1"/>
</dbReference>
<accession>C0RJI7</accession>
<protein>
    <recommendedName>
        <fullName evidence="1">Small ribosomal subunit protein uS8</fullName>
    </recommendedName>
    <alternativeName>
        <fullName evidence="2">30S ribosomal protein S8</fullName>
    </alternativeName>
</protein>
<sequence>MSVSDPLGDMLTRIRNAVGRKKTKVSTPASKLRARVLDVLQAEGYIRGYTQSEFENGKAEIEIELKYYEGVPVIREITRVSKPGRRVYVSVKSIPQVANGLGISILSTPKGVMADHEAREQNVGGELLCRIF</sequence>